<reference key="1">
    <citation type="journal article" date="2005" name="J. Bacteriol.">
        <title>Insights on evolution of virulence and resistance from the complete genome analysis of an early methicillin-resistant Staphylococcus aureus strain and a biofilm-producing methicillin-resistant Staphylococcus epidermidis strain.</title>
        <authorList>
            <person name="Gill S.R."/>
            <person name="Fouts D.E."/>
            <person name="Archer G.L."/>
            <person name="Mongodin E.F."/>
            <person name="DeBoy R.T."/>
            <person name="Ravel J."/>
            <person name="Paulsen I.T."/>
            <person name="Kolonay J.F."/>
            <person name="Brinkac L.M."/>
            <person name="Beanan M.J."/>
            <person name="Dodson R.J."/>
            <person name="Daugherty S.C."/>
            <person name="Madupu R."/>
            <person name="Angiuoli S.V."/>
            <person name="Durkin A.S."/>
            <person name="Haft D.H."/>
            <person name="Vamathevan J.J."/>
            <person name="Khouri H."/>
            <person name="Utterback T.R."/>
            <person name="Lee C."/>
            <person name="Dimitrov G."/>
            <person name="Jiang L."/>
            <person name="Qin H."/>
            <person name="Weidman J."/>
            <person name="Tran K."/>
            <person name="Kang K.H."/>
            <person name="Hance I.R."/>
            <person name="Nelson K.E."/>
            <person name="Fraser C.M."/>
        </authorList>
    </citation>
    <scope>NUCLEOTIDE SEQUENCE [LARGE SCALE GENOMIC DNA]</scope>
    <source>
        <strain>COL</strain>
    </source>
</reference>
<reference key="2">
    <citation type="journal article" date="2006" name="Biochemistry">
        <title>The structure of the carboxyltransferase component of acetyl-coA carboxylase reveals a zinc-binding motif unique to the bacterial enzyme.</title>
        <authorList>
            <person name="Bilder P."/>
            <person name="Lightle S."/>
            <person name="Bainbridge G."/>
            <person name="Ohren J."/>
            <person name="Finzel B."/>
            <person name="Sun F."/>
            <person name="Holley S."/>
            <person name="Al-Kassim L."/>
            <person name="Spessard C."/>
            <person name="Melnick M."/>
            <person name="Newcomer M."/>
            <person name="Waldrop G.L."/>
        </authorList>
    </citation>
    <scope>X-RAY CRYSTALLOGRAPHY (1.98 ANGSTROMS)</scope>
    <scope>ZINC-BINDING</scope>
</reference>
<comment type="function">
    <text evidence="1">Component of the acetyl coenzyme A carboxylase (ACC) complex. Biotin carboxylase (BC) catalyzes the carboxylation of biotin on its carrier protein (BCCP) and then the CO(2) group is transferred by the transcarboxylase to acetyl-CoA to form malonyl-CoA.</text>
</comment>
<comment type="catalytic activity">
    <reaction evidence="1">
        <text>N(6)-carboxybiotinyl-L-lysyl-[protein] + acetyl-CoA = N(6)-biotinyl-L-lysyl-[protein] + malonyl-CoA</text>
        <dbReference type="Rhea" id="RHEA:54728"/>
        <dbReference type="Rhea" id="RHEA-COMP:10505"/>
        <dbReference type="Rhea" id="RHEA-COMP:10506"/>
        <dbReference type="ChEBI" id="CHEBI:57288"/>
        <dbReference type="ChEBI" id="CHEBI:57384"/>
        <dbReference type="ChEBI" id="CHEBI:83144"/>
        <dbReference type="ChEBI" id="CHEBI:83145"/>
        <dbReference type="EC" id="2.1.3.15"/>
    </reaction>
</comment>
<comment type="cofactor">
    <cofactor evidence="1">
        <name>Zn(2+)</name>
        <dbReference type="ChEBI" id="CHEBI:29105"/>
    </cofactor>
    <text evidence="1">Binds 1 zinc ion per subunit.</text>
</comment>
<comment type="pathway">
    <text evidence="1">Lipid metabolism; malonyl-CoA biosynthesis; malonyl-CoA from acetyl-CoA: step 1/1.</text>
</comment>
<comment type="subunit">
    <text evidence="1">Acetyl-CoA carboxylase is a heterohexamer composed of biotin carboxyl carrier protein (AccB), biotin carboxylase (AccC) and two subunits each of ACCase subunit alpha (AccA) and ACCase subunit beta (AccD).</text>
</comment>
<comment type="subcellular location">
    <subcellularLocation>
        <location evidence="3">Cytoplasm</location>
    </subcellularLocation>
</comment>
<comment type="miscellaneous">
    <text>It is not known from which strain the crystal structure is derived.</text>
</comment>
<comment type="similarity">
    <text evidence="1">Belongs to the AccD/PCCB family.</text>
</comment>
<gene>
    <name evidence="1" type="primary">accD</name>
    <name type="ordered locus">SACOL1748</name>
</gene>
<evidence type="ECO:0000255" key="1">
    <source>
        <dbReference type="HAMAP-Rule" id="MF_01395"/>
    </source>
</evidence>
<evidence type="ECO:0000255" key="2">
    <source>
        <dbReference type="PROSITE-ProRule" id="PRU01136"/>
    </source>
</evidence>
<evidence type="ECO:0000305" key="3"/>
<evidence type="ECO:0007829" key="4">
    <source>
        <dbReference type="PDB" id="2F9I"/>
    </source>
</evidence>
<accession>Q5HF73</accession>
<name>ACCD_STAAC</name>
<feature type="chain" id="PRO_0000389848" description="Acetyl-coenzyme A carboxylase carboxyl transferase subunit beta">
    <location>
        <begin position="1"/>
        <end position="285"/>
    </location>
</feature>
<feature type="domain" description="CoA carboxyltransferase N-terminal" evidence="2">
    <location>
        <begin position="29"/>
        <end position="285"/>
    </location>
</feature>
<feature type="zinc finger region" description="C4-type" evidence="1">
    <location>
        <begin position="33"/>
        <end position="55"/>
    </location>
</feature>
<feature type="binding site" evidence="1">
    <location>
        <position position="33"/>
    </location>
    <ligand>
        <name>Zn(2+)</name>
        <dbReference type="ChEBI" id="CHEBI:29105"/>
    </ligand>
</feature>
<feature type="binding site" evidence="1">
    <location>
        <position position="36"/>
    </location>
    <ligand>
        <name>Zn(2+)</name>
        <dbReference type="ChEBI" id="CHEBI:29105"/>
    </ligand>
</feature>
<feature type="binding site" evidence="1">
    <location>
        <position position="52"/>
    </location>
    <ligand>
        <name>Zn(2+)</name>
        <dbReference type="ChEBI" id="CHEBI:29105"/>
    </ligand>
</feature>
<feature type="binding site" evidence="1">
    <location>
        <position position="55"/>
    </location>
    <ligand>
        <name>Zn(2+)</name>
        <dbReference type="ChEBI" id="CHEBI:29105"/>
    </ligand>
</feature>
<feature type="strand" evidence="4">
    <location>
        <begin position="28"/>
        <end position="32"/>
    </location>
</feature>
<feature type="turn" evidence="4">
    <location>
        <begin position="34"/>
        <end position="36"/>
    </location>
</feature>
<feature type="strand" evidence="4">
    <location>
        <begin position="39"/>
        <end position="41"/>
    </location>
</feature>
<feature type="helix" evidence="4">
    <location>
        <begin position="42"/>
        <end position="47"/>
    </location>
</feature>
<feature type="turn" evidence="4">
    <location>
        <begin position="48"/>
        <end position="50"/>
    </location>
</feature>
<feature type="turn" evidence="4">
    <location>
        <begin position="53"/>
        <end position="55"/>
    </location>
</feature>
<feature type="helix" evidence="4">
    <location>
        <begin position="63"/>
        <end position="69"/>
    </location>
</feature>
<feature type="strand" evidence="4">
    <location>
        <begin position="77"/>
        <end position="80"/>
    </location>
</feature>
<feature type="helix" evidence="4">
    <location>
        <begin position="94"/>
        <end position="105"/>
    </location>
</feature>
<feature type="strand" evidence="4">
    <location>
        <begin position="108"/>
        <end position="118"/>
    </location>
</feature>
<feature type="strand" evidence="4">
    <location>
        <begin position="121"/>
        <end position="128"/>
    </location>
</feature>
<feature type="turn" evidence="4">
    <location>
        <begin position="130"/>
        <end position="132"/>
    </location>
</feature>
<feature type="helix" evidence="4">
    <location>
        <begin position="133"/>
        <end position="135"/>
    </location>
</feature>
<feature type="helix" evidence="4">
    <location>
        <begin position="139"/>
        <end position="154"/>
    </location>
</feature>
<feature type="strand" evidence="4">
    <location>
        <begin position="159"/>
        <end position="165"/>
    </location>
</feature>
<feature type="helix" evidence="4">
    <location>
        <begin position="170"/>
        <end position="172"/>
    </location>
</feature>
<feature type="helix" evidence="4">
    <location>
        <begin position="173"/>
        <end position="192"/>
    </location>
</feature>
<feature type="strand" evidence="4">
    <location>
        <begin position="197"/>
        <end position="206"/>
    </location>
</feature>
<feature type="helix" evidence="4">
    <location>
        <begin position="207"/>
        <end position="210"/>
    </location>
</feature>
<feature type="helix" evidence="4">
    <location>
        <begin position="213"/>
        <end position="215"/>
    </location>
</feature>
<feature type="strand" evidence="4">
    <location>
        <begin position="218"/>
        <end position="222"/>
    </location>
</feature>
<feature type="strand" evidence="4">
    <location>
        <begin position="227"/>
        <end position="231"/>
    </location>
</feature>
<feature type="helix" evidence="4">
    <location>
        <begin position="233"/>
        <end position="240"/>
    </location>
</feature>
<feature type="turn" evidence="4">
    <location>
        <begin position="246"/>
        <end position="249"/>
    </location>
</feature>
<feature type="helix" evidence="4">
    <location>
        <begin position="251"/>
        <end position="256"/>
    </location>
</feature>
<feature type="strand" evidence="4">
    <location>
        <begin position="261"/>
        <end position="263"/>
    </location>
</feature>
<feature type="helix" evidence="4">
    <location>
        <begin position="266"/>
        <end position="268"/>
    </location>
</feature>
<feature type="helix" evidence="4">
    <location>
        <begin position="269"/>
        <end position="279"/>
    </location>
</feature>
<proteinExistence type="evidence at protein level"/>
<protein>
    <recommendedName>
        <fullName evidence="1">Acetyl-coenzyme A carboxylase carboxyl transferase subunit beta</fullName>
        <shortName evidence="1">ACCase subunit beta</shortName>
        <shortName evidence="1">Acetyl-CoA carboxylase carboxyltransferase subunit beta</shortName>
        <ecNumber evidence="1">2.1.3.15</ecNumber>
    </recommendedName>
</protein>
<dbReference type="EC" id="2.1.3.15" evidence="1"/>
<dbReference type="EMBL" id="CP000046">
    <property type="protein sequence ID" value="AAW36851.1"/>
    <property type="molecule type" value="Genomic_DNA"/>
</dbReference>
<dbReference type="RefSeq" id="WP_000471571.1">
    <property type="nucleotide sequence ID" value="NZ_JBGOFO010000008.1"/>
</dbReference>
<dbReference type="PDB" id="2F9I">
    <property type="method" value="X-ray"/>
    <property type="resolution" value="1.98 A"/>
    <property type="chains" value="B/D=1-285"/>
</dbReference>
<dbReference type="PDBsum" id="2F9I"/>
<dbReference type="SMR" id="Q5HF73"/>
<dbReference type="KEGG" id="sac:SACOL1748"/>
<dbReference type="HOGENOM" id="CLU_015486_1_0_9"/>
<dbReference type="UniPathway" id="UPA00655">
    <property type="reaction ID" value="UER00711"/>
</dbReference>
<dbReference type="EvolutionaryTrace" id="Q5HF73"/>
<dbReference type="PHI-base" id="PHI:10348"/>
<dbReference type="Proteomes" id="UP000000530">
    <property type="component" value="Chromosome"/>
</dbReference>
<dbReference type="GO" id="GO:0009317">
    <property type="term" value="C:acetyl-CoA carboxylase complex"/>
    <property type="evidence" value="ECO:0007669"/>
    <property type="project" value="InterPro"/>
</dbReference>
<dbReference type="GO" id="GO:0003989">
    <property type="term" value="F:acetyl-CoA carboxylase activity"/>
    <property type="evidence" value="ECO:0007669"/>
    <property type="project" value="InterPro"/>
</dbReference>
<dbReference type="GO" id="GO:0005524">
    <property type="term" value="F:ATP binding"/>
    <property type="evidence" value="ECO:0007669"/>
    <property type="project" value="UniProtKB-KW"/>
</dbReference>
<dbReference type="GO" id="GO:0016743">
    <property type="term" value="F:carboxyl- or carbamoyltransferase activity"/>
    <property type="evidence" value="ECO:0007669"/>
    <property type="project" value="UniProtKB-UniRule"/>
</dbReference>
<dbReference type="GO" id="GO:0008270">
    <property type="term" value="F:zinc ion binding"/>
    <property type="evidence" value="ECO:0007669"/>
    <property type="project" value="UniProtKB-UniRule"/>
</dbReference>
<dbReference type="GO" id="GO:0006633">
    <property type="term" value="P:fatty acid biosynthetic process"/>
    <property type="evidence" value="ECO:0007669"/>
    <property type="project" value="UniProtKB-KW"/>
</dbReference>
<dbReference type="GO" id="GO:2001295">
    <property type="term" value="P:malonyl-CoA biosynthetic process"/>
    <property type="evidence" value="ECO:0007669"/>
    <property type="project" value="UniProtKB-UniRule"/>
</dbReference>
<dbReference type="Gene3D" id="3.90.226.10">
    <property type="entry name" value="2-enoyl-CoA Hydratase, Chain A, domain 1"/>
    <property type="match status" value="1"/>
</dbReference>
<dbReference type="HAMAP" id="MF_01395">
    <property type="entry name" value="AcetylCoA_CT_beta"/>
    <property type="match status" value="1"/>
</dbReference>
<dbReference type="InterPro" id="IPR034733">
    <property type="entry name" value="AcCoA_carboxyl_beta"/>
</dbReference>
<dbReference type="InterPro" id="IPR000438">
    <property type="entry name" value="Acetyl_CoA_COase_Trfase_b_su"/>
</dbReference>
<dbReference type="InterPro" id="IPR029045">
    <property type="entry name" value="ClpP/crotonase-like_dom_sf"/>
</dbReference>
<dbReference type="InterPro" id="IPR011762">
    <property type="entry name" value="COA_CT_N"/>
</dbReference>
<dbReference type="InterPro" id="IPR041010">
    <property type="entry name" value="Znf-ACC"/>
</dbReference>
<dbReference type="NCBIfam" id="TIGR00515">
    <property type="entry name" value="accD"/>
    <property type="match status" value="1"/>
</dbReference>
<dbReference type="PANTHER" id="PTHR42995">
    <property type="entry name" value="ACETYL-COENZYME A CARBOXYLASE CARBOXYL TRANSFERASE SUBUNIT BETA, CHLOROPLASTIC"/>
    <property type="match status" value="1"/>
</dbReference>
<dbReference type="PANTHER" id="PTHR42995:SF5">
    <property type="entry name" value="ACETYL-COENZYME A CARBOXYLASE CARBOXYL TRANSFERASE SUBUNIT BETA, CHLOROPLASTIC"/>
    <property type="match status" value="1"/>
</dbReference>
<dbReference type="Pfam" id="PF01039">
    <property type="entry name" value="Carboxyl_trans"/>
    <property type="match status" value="1"/>
</dbReference>
<dbReference type="Pfam" id="PF17848">
    <property type="entry name" value="Zn_ribbon_ACC"/>
    <property type="match status" value="1"/>
</dbReference>
<dbReference type="PRINTS" id="PR01070">
    <property type="entry name" value="ACCCTRFRASEB"/>
</dbReference>
<dbReference type="SUPFAM" id="SSF52096">
    <property type="entry name" value="ClpP/crotonase"/>
    <property type="match status" value="1"/>
</dbReference>
<dbReference type="PROSITE" id="PS50980">
    <property type="entry name" value="COA_CT_NTER"/>
    <property type="match status" value="1"/>
</dbReference>
<sequence length="285" mass="31872">MFKDFFNRTKKKKYLTVQDSKNNDVPAGIMTKCPKCKKIMYTKELAENLNVCFNCDHHIALTAYKRIEAISDEGSFTEFDKGMTSANPLDFPSYLEKIEKDQQKTGLKEAVVTGTAQLDGMKFGVAVMDSRFRMGSMGSVIGEKICRIIDYCTENRLPFILFSASGGARMQEGIISLMQMGKTSVSLKRHSDAGLLYISYLTHPTTGGVSASFASVGDINLSEPKALIGFAGRRVIEQTINEKLPDDFQTAEFLLEHGQLDKVVHRNDMRQTLSEILKIHQEVTK</sequence>
<organism>
    <name type="scientific">Staphylococcus aureus (strain COL)</name>
    <dbReference type="NCBI Taxonomy" id="93062"/>
    <lineage>
        <taxon>Bacteria</taxon>
        <taxon>Bacillati</taxon>
        <taxon>Bacillota</taxon>
        <taxon>Bacilli</taxon>
        <taxon>Bacillales</taxon>
        <taxon>Staphylococcaceae</taxon>
        <taxon>Staphylococcus</taxon>
    </lineage>
</organism>
<keyword id="KW-0002">3D-structure</keyword>
<keyword id="KW-0067">ATP-binding</keyword>
<keyword id="KW-0963">Cytoplasm</keyword>
<keyword id="KW-0275">Fatty acid biosynthesis</keyword>
<keyword id="KW-0276">Fatty acid metabolism</keyword>
<keyword id="KW-0444">Lipid biosynthesis</keyword>
<keyword id="KW-0443">Lipid metabolism</keyword>
<keyword id="KW-0479">Metal-binding</keyword>
<keyword id="KW-0547">Nucleotide-binding</keyword>
<keyword id="KW-0808">Transferase</keyword>
<keyword id="KW-0862">Zinc</keyword>
<keyword id="KW-0863">Zinc-finger</keyword>